<accession>Q6D0E6</accession>
<evidence type="ECO:0000255" key="1">
    <source>
        <dbReference type="HAMAP-Rule" id="MF_01821"/>
    </source>
</evidence>
<feature type="chain" id="PRO_0000207175" description="RNA polymerase-associated protein RapA">
    <location>
        <begin position="1"/>
        <end position="967"/>
    </location>
</feature>
<feature type="domain" description="Helicase ATP-binding" evidence="1">
    <location>
        <begin position="163"/>
        <end position="333"/>
    </location>
</feature>
<feature type="domain" description="Helicase C-terminal" evidence="1">
    <location>
        <begin position="489"/>
        <end position="677"/>
    </location>
</feature>
<feature type="short sequence motif" description="DEAH box">
    <location>
        <begin position="279"/>
        <end position="282"/>
    </location>
</feature>
<feature type="binding site" evidence="1">
    <location>
        <begin position="176"/>
        <end position="183"/>
    </location>
    <ligand>
        <name>ATP</name>
        <dbReference type="ChEBI" id="CHEBI:30616"/>
    </ligand>
</feature>
<gene>
    <name evidence="1" type="primary">rapA</name>
    <name type="synonym">hepA</name>
    <name type="ordered locus">ECA3853</name>
</gene>
<reference key="1">
    <citation type="journal article" date="2004" name="Proc. Natl. Acad. Sci. U.S.A.">
        <title>Genome sequence of the enterobacterial phytopathogen Erwinia carotovora subsp. atroseptica and characterization of virulence factors.</title>
        <authorList>
            <person name="Bell K.S."/>
            <person name="Sebaihia M."/>
            <person name="Pritchard L."/>
            <person name="Holden M.T.G."/>
            <person name="Hyman L.J."/>
            <person name="Holeva M.C."/>
            <person name="Thomson N.R."/>
            <person name="Bentley S.D."/>
            <person name="Churcher L.J.C."/>
            <person name="Mungall K."/>
            <person name="Atkin R."/>
            <person name="Bason N."/>
            <person name="Brooks K."/>
            <person name="Chillingworth T."/>
            <person name="Clark K."/>
            <person name="Doggett J."/>
            <person name="Fraser A."/>
            <person name="Hance Z."/>
            <person name="Hauser H."/>
            <person name="Jagels K."/>
            <person name="Moule S."/>
            <person name="Norbertczak H."/>
            <person name="Ormond D."/>
            <person name="Price C."/>
            <person name="Quail M.A."/>
            <person name="Sanders M."/>
            <person name="Walker D."/>
            <person name="Whitehead S."/>
            <person name="Salmond G.P.C."/>
            <person name="Birch P.R.J."/>
            <person name="Parkhill J."/>
            <person name="Toth I.K."/>
        </authorList>
    </citation>
    <scope>NUCLEOTIDE SEQUENCE [LARGE SCALE GENOMIC DNA]</scope>
    <source>
        <strain>SCRI 1043 / ATCC BAA-672</strain>
    </source>
</reference>
<keyword id="KW-0010">Activator</keyword>
<keyword id="KW-0067">ATP-binding</keyword>
<keyword id="KW-0238">DNA-binding</keyword>
<keyword id="KW-0347">Helicase</keyword>
<keyword id="KW-0378">Hydrolase</keyword>
<keyword id="KW-0547">Nucleotide-binding</keyword>
<keyword id="KW-1185">Reference proteome</keyword>
<keyword id="KW-0804">Transcription</keyword>
<keyword id="KW-0805">Transcription regulation</keyword>
<protein>
    <recommendedName>
        <fullName evidence="1">RNA polymerase-associated protein RapA</fullName>
        <ecNumber evidence="1">3.6.4.-</ecNumber>
    </recommendedName>
    <alternativeName>
        <fullName evidence="1">ATP-dependent helicase HepA</fullName>
    </alternativeName>
</protein>
<proteinExistence type="inferred from homology"/>
<sequence length="967" mass="109835">MPFTLGQRWISDTESELGLGTVVAVNTRMITLLFPASGENRLYSRSDAPITRVMFNPGDTVTSHEGWQLKIDDVREEKGLLVYCGQRLDDETPAELREVFLDSKLTFNKPQDRLFAGQIDRMDRFALRYRARKHQNEQALQQWGGLRGMRASLIPHQLHIAYEVGQRHAPRVLLADEVGLGKTIEAGMIIHQQLLAGRASRVLIVVPETLQHQWLVEMLRRFNLLFSLFDDERYAEAKLDSSNPFETEQLVICSLGFVQRSAQRFAQLVNTDWDLLVVDEAHHLVWSEESPSPEYQAIEALARATPAVLLLTATPEQLGQQSHFARLRLLDPNRFHDYQEFVAEQQQYRPVADAVTLLLAGEKAQAAELNVLSDLLGEQDIEPLLKSINSDSDDNQKARQELITMLMDRHGTSRVLFRNTRQGVKGFPQRVLHQIRLPLPAQYQTAIKVSGIMNANKPLETRARDMLYPEQIYQQLEGDDATWWNFDPRVEWLLNYLTTNRDEKVLVICAQAATALQLEQVLRTREAIRAAVFHEGLSILERDRAAAYFASEEEGAQVLICSEIGSEGRNFQFASHLVMFDLPFNPDLLEQRIGRLDRIGQAKEIQVLVPYLENTAQALLVRWYHEGLDAFEHTCPTGRTIYDAHHAQLIERLTTVGEQQGLDEFIHTCRQQHDSLKQQLEQGRDRLLEMHSNGGEQAQLLAQAIAEQDNDVNLVTFALNLFDIVGINQEDRSDNLIILTPSDHMLVPDFPGLPQDGCTITFDRDQALSREDAQFISWEHPLIRNGLDLVLSGDTGSCAVSLLKNKALPVGTLLAELVYVVEAQAPKHLQLTRFLPPTPVRLLMDRKGTNLAAQVEFESFNRQLNAVNRHTSSKLVNAVQSDVHAMLQQAEALVETQARQLITEAQQQADLQLRRELERLEALKAVNPNIREDELTALENQREQVLSNLHEANWRLDAIRLVVVTHQ</sequence>
<comment type="function">
    <text evidence="1">Transcription regulator that activates transcription by stimulating RNA polymerase (RNAP) recycling in case of stress conditions such as supercoiled DNA or high salt concentrations. Probably acts by releasing the RNAP, when it is trapped or immobilized on tightly supercoiled DNA. Does not activate transcription on linear DNA. Probably not involved in DNA repair.</text>
</comment>
<comment type="subunit">
    <text evidence="1">Interacts with the RNAP. Has a higher affinity for the core RNAP than for the holoenzyme. Its ATPase activity is stimulated by binding to RNAP.</text>
</comment>
<comment type="similarity">
    <text evidence="1">Belongs to the SNF2/RAD54 helicase family. RapA subfamily.</text>
</comment>
<organism>
    <name type="scientific">Pectobacterium atrosepticum (strain SCRI 1043 / ATCC BAA-672)</name>
    <name type="common">Erwinia carotovora subsp. atroseptica</name>
    <dbReference type="NCBI Taxonomy" id="218491"/>
    <lineage>
        <taxon>Bacteria</taxon>
        <taxon>Pseudomonadati</taxon>
        <taxon>Pseudomonadota</taxon>
        <taxon>Gammaproteobacteria</taxon>
        <taxon>Enterobacterales</taxon>
        <taxon>Pectobacteriaceae</taxon>
        <taxon>Pectobacterium</taxon>
    </lineage>
</organism>
<dbReference type="EC" id="3.6.4.-" evidence="1"/>
<dbReference type="EMBL" id="BX950851">
    <property type="protein sequence ID" value="CAG76751.1"/>
    <property type="molecule type" value="Genomic_DNA"/>
</dbReference>
<dbReference type="RefSeq" id="WP_011095351.1">
    <property type="nucleotide sequence ID" value="NC_004547.2"/>
</dbReference>
<dbReference type="SMR" id="Q6D0E6"/>
<dbReference type="STRING" id="218491.ECA3853"/>
<dbReference type="GeneID" id="57210471"/>
<dbReference type="KEGG" id="eca:ECA3853"/>
<dbReference type="PATRIC" id="fig|218491.5.peg.3908"/>
<dbReference type="eggNOG" id="COG0553">
    <property type="taxonomic scope" value="Bacteria"/>
</dbReference>
<dbReference type="HOGENOM" id="CLU_011520_0_0_6"/>
<dbReference type="OrthoDB" id="9814088at2"/>
<dbReference type="Proteomes" id="UP000007966">
    <property type="component" value="Chromosome"/>
</dbReference>
<dbReference type="GO" id="GO:0005524">
    <property type="term" value="F:ATP binding"/>
    <property type="evidence" value="ECO:0007669"/>
    <property type="project" value="UniProtKB-UniRule"/>
</dbReference>
<dbReference type="GO" id="GO:0003677">
    <property type="term" value="F:DNA binding"/>
    <property type="evidence" value="ECO:0007669"/>
    <property type="project" value="UniProtKB-KW"/>
</dbReference>
<dbReference type="GO" id="GO:0004386">
    <property type="term" value="F:helicase activity"/>
    <property type="evidence" value="ECO:0007669"/>
    <property type="project" value="UniProtKB-UniRule"/>
</dbReference>
<dbReference type="GO" id="GO:0016817">
    <property type="term" value="F:hydrolase activity, acting on acid anhydrides"/>
    <property type="evidence" value="ECO:0007669"/>
    <property type="project" value="InterPro"/>
</dbReference>
<dbReference type="GO" id="GO:0006355">
    <property type="term" value="P:regulation of DNA-templated transcription"/>
    <property type="evidence" value="ECO:0007669"/>
    <property type="project" value="UniProtKB-UniRule"/>
</dbReference>
<dbReference type="CDD" id="cd18011">
    <property type="entry name" value="DEXDc_RapA"/>
    <property type="match status" value="1"/>
</dbReference>
<dbReference type="CDD" id="cd18793">
    <property type="entry name" value="SF2_C_SNF"/>
    <property type="match status" value="1"/>
</dbReference>
<dbReference type="FunFam" id="3.30.360.80:FF:000001">
    <property type="entry name" value="RNA polymerase-associated protein RapA"/>
    <property type="match status" value="1"/>
</dbReference>
<dbReference type="FunFam" id="3.40.50.10810:FF:000012">
    <property type="entry name" value="RNA polymerase-associated protein RapA"/>
    <property type="match status" value="1"/>
</dbReference>
<dbReference type="Gene3D" id="2.30.30.140">
    <property type="match status" value="1"/>
</dbReference>
<dbReference type="Gene3D" id="2.30.30.930">
    <property type="match status" value="1"/>
</dbReference>
<dbReference type="Gene3D" id="3.30.360.80">
    <property type="match status" value="1"/>
</dbReference>
<dbReference type="Gene3D" id="6.10.140.1500">
    <property type="match status" value="1"/>
</dbReference>
<dbReference type="Gene3D" id="6.10.140.2230">
    <property type="match status" value="1"/>
</dbReference>
<dbReference type="Gene3D" id="3.40.50.300">
    <property type="entry name" value="P-loop containing nucleotide triphosphate hydrolases"/>
    <property type="match status" value="1"/>
</dbReference>
<dbReference type="Gene3D" id="3.40.50.10810">
    <property type="entry name" value="Tandem AAA-ATPase domain"/>
    <property type="match status" value="1"/>
</dbReference>
<dbReference type="HAMAP" id="MF_01821">
    <property type="entry name" value="Helicase_RapA"/>
    <property type="match status" value="1"/>
</dbReference>
<dbReference type="InterPro" id="IPR014001">
    <property type="entry name" value="Helicase_ATP-bd"/>
</dbReference>
<dbReference type="InterPro" id="IPR001650">
    <property type="entry name" value="Helicase_C-like"/>
</dbReference>
<dbReference type="InterPro" id="IPR023949">
    <property type="entry name" value="Helicase_RapA"/>
</dbReference>
<dbReference type="InterPro" id="IPR027417">
    <property type="entry name" value="P-loop_NTPase"/>
</dbReference>
<dbReference type="InterPro" id="IPR022737">
    <property type="entry name" value="RapA_C"/>
</dbReference>
<dbReference type="InterPro" id="IPR038718">
    <property type="entry name" value="SNF2-like_sf"/>
</dbReference>
<dbReference type="InterPro" id="IPR049730">
    <property type="entry name" value="SNF2/RAD54-like_C"/>
</dbReference>
<dbReference type="InterPro" id="IPR000330">
    <property type="entry name" value="SNF2_N"/>
</dbReference>
<dbReference type="InterPro" id="IPR040765">
    <property type="entry name" value="Tudor_1_RapA"/>
</dbReference>
<dbReference type="InterPro" id="IPR040766">
    <property type="entry name" value="Tudor_2_RapA"/>
</dbReference>
<dbReference type="NCBIfam" id="NF003426">
    <property type="entry name" value="PRK04914.1"/>
    <property type="match status" value="1"/>
</dbReference>
<dbReference type="PANTHER" id="PTHR45766">
    <property type="entry name" value="DNA ANNEALING HELICASE AND ENDONUCLEASE ZRANB3 FAMILY MEMBER"/>
    <property type="match status" value="1"/>
</dbReference>
<dbReference type="PANTHER" id="PTHR45766:SF6">
    <property type="entry name" value="SWI_SNF-RELATED MATRIX-ASSOCIATED ACTIN-DEPENDENT REGULATOR OF CHROMATIN SUBFAMILY A-LIKE PROTEIN 1"/>
    <property type="match status" value="1"/>
</dbReference>
<dbReference type="Pfam" id="PF00271">
    <property type="entry name" value="Helicase_C"/>
    <property type="match status" value="1"/>
</dbReference>
<dbReference type="Pfam" id="PF12137">
    <property type="entry name" value="RapA_C"/>
    <property type="match status" value="1"/>
</dbReference>
<dbReference type="Pfam" id="PF00176">
    <property type="entry name" value="SNF2-rel_dom"/>
    <property type="match status" value="1"/>
</dbReference>
<dbReference type="Pfam" id="PF18339">
    <property type="entry name" value="Tudor_1_RapA"/>
    <property type="match status" value="1"/>
</dbReference>
<dbReference type="Pfam" id="PF18337">
    <property type="entry name" value="Tudor_RapA"/>
    <property type="match status" value="1"/>
</dbReference>
<dbReference type="SMART" id="SM00487">
    <property type="entry name" value="DEXDc"/>
    <property type="match status" value="1"/>
</dbReference>
<dbReference type="SMART" id="SM00490">
    <property type="entry name" value="HELICc"/>
    <property type="match status" value="1"/>
</dbReference>
<dbReference type="SUPFAM" id="SSF52540">
    <property type="entry name" value="P-loop containing nucleoside triphosphate hydrolases"/>
    <property type="match status" value="2"/>
</dbReference>
<dbReference type="PROSITE" id="PS51192">
    <property type="entry name" value="HELICASE_ATP_BIND_1"/>
    <property type="match status" value="1"/>
</dbReference>
<dbReference type="PROSITE" id="PS51194">
    <property type="entry name" value="HELICASE_CTER"/>
    <property type="match status" value="1"/>
</dbReference>
<name>RAPA_PECAS</name>